<proteinExistence type="inferred from homology"/>
<reference key="1">
    <citation type="journal article" date="2004" name="Proc. Natl. Acad. Sci. U.S.A.">
        <title>Complete genomes of two clinical Staphylococcus aureus strains: evidence for the rapid evolution of virulence and drug resistance.</title>
        <authorList>
            <person name="Holden M.T.G."/>
            <person name="Feil E.J."/>
            <person name="Lindsay J.A."/>
            <person name="Peacock S.J."/>
            <person name="Day N.P.J."/>
            <person name="Enright M.C."/>
            <person name="Foster T.J."/>
            <person name="Moore C.E."/>
            <person name="Hurst L."/>
            <person name="Atkin R."/>
            <person name="Barron A."/>
            <person name="Bason N."/>
            <person name="Bentley S.D."/>
            <person name="Chillingworth C."/>
            <person name="Chillingworth T."/>
            <person name="Churcher C."/>
            <person name="Clark L."/>
            <person name="Corton C."/>
            <person name="Cronin A."/>
            <person name="Doggett J."/>
            <person name="Dowd L."/>
            <person name="Feltwell T."/>
            <person name="Hance Z."/>
            <person name="Harris B."/>
            <person name="Hauser H."/>
            <person name="Holroyd S."/>
            <person name="Jagels K."/>
            <person name="James K.D."/>
            <person name="Lennard N."/>
            <person name="Line A."/>
            <person name="Mayes R."/>
            <person name="Moule S."/>
            <person name="Mungall K."/>
            <person name="Ormond D."/>
            <person name="Quail M.A."/>
            <person name="Rabbinowitsch E."/>
            <person name="Rutherford K.M."/>
            <person name="Sanders M."/>
            <person name="Sharp S."/>
            <person name="Simmonds M."/>
            <person name="Stevens K."/>
            <person name="Whitehead S."/>
            <person name="Barrell B.G."/>
            <person name="Spratt B.G."/>
            <person name="Parkhill J."/>
        </authorList>
    </citation>
    <scope>NUCLEOTIDE SEQUENCE [LARGE SCALE GENOMIC DNA]</scope>
    <source>
        <strain>MSSA476</strain>
    </source>
</reference>
<name>ISPT_STAAS</name>
<dbReference type="EC" id="2.5.1.-" evidence="1"/>
<dbReference type="EMBL" id="BX571857">
    <property type="protein sequence ID" value="CAG42971.1"/>
    <property type="molecule type" value="Genomic_DNA"/>
</dbReference>
<dbReference type="RefSeq" id="WP_000473705.1">
    <property type="nucleotide sequence ID" value="NC_002953.3"/>
</dbReference>
<dbReference type="SMR" id="Q6G9V3"/>
<dbReference type="KEGG" id="sas:SAS1194"/>
<dbReference type="HOGENOM" id="CLU_038505_1_1_9"/>
<dbReference type="GO" id="GO:0005829">
    <property type="term" value="C:cytosol"/>
    <property type="evidence" value="ECO:0007669"/>
    <property type="project" value="TreeGrafter"/>
</dbReference>
<dbReference type="GO" id="GO:0008834">
    <property type="term" value="F:ditrans,polycis-undecaprenyl-diphosphate synthase [(2E,6E)-farnesyl-diphosphate specific] activity"/>
    <property type="evidence" value="ECO:0007669"/>
    <property type="project" value="TreeGrafter"/>
</dbReference>
<dbReference type="GO" id="GO:0000287">
    <property type="term" value="F:magnesium ion binding"/>
    <property type="evidence" value="ECO:0007669"/>
    <property type="project" value="UniProtKB-UniRule"/>
</dbReference>
<dbReference type="GO" id="GO:0030145">
    <property type="term" value="F:manganese ion binding"/>
    <property type="evidence" value="ECO:0007669"/>
    <property type="project" value="TreeGrafter"/>
</dbReference>
<dbReference type="GO" id="GO:0016094">
    <property type="term" value="P:polyprenol biosynthetic process"/>
    <property type="evidence" value="ECO:0007669"/>
    <property type="project" value="TreeGrafter"/>
</dbReference>
<dbReference type="CDD" id="cd00475">
    <property type="entry name" value="Cis_IPPS"/>
    <property type="match status" value="1"/>
</dbReference>
<dbReference type="FunFam" id="3.40.1180.10:FF:000001">
    <property type="entry name" value="(2E,6E)-farnesyl-diphosphate-specific ditrans,polycis-undecaprenyl-diphosphate synthase"/>
    <property type="match status" value="1"/>
</dbReference>
<dbReference type="Gene3D" id="3.40.1180.10">
    <property type="entry name" value="Decaprenyl diphosphate synthase-like"/>
    <property type="match status" value="1"/>
</dbReference>
<dbReference type="HAMAP" id="MF_01139">
    <property type="entry name" value="ISPT"/>
    <property type="match status" value="1"/>
</dbReference>
<dbReference type="InterPro" id="IPR001441">
    <property type="entry name" value="UPP_synth-like"/>
</dbReference>
<dbReference type="InterPro" id="IPR018520">
    <property type="entry name" value="UPP_synth-like_CS"/>
</dbReference>
<dbReference type="InterPro" id="IPR036424">
    <property type="entry name" value="UPP_synth-like_sf"/>
</dbReference>
<dbReference type="NCBIfam" id="NF011405">
    <property type="entry name" value="PRK14830.1"/>
    <property type="match status" value="1"/>
</dbReference>
<dbReference type="NCBIfam" id="TIGR00055">
    <property type="entry name" value="uppS"/>
    <property type="match status" value="1"/>
</dbReference>
<dbReference type="PANTHER" id="PTHR10291:SF0">
    <property type="entry name" value="DEHYDRODOLICHYL DIPHOSPHATE SYNTHASE 2"/>
    <property type="match status" value="1"/>
</dbReference>
<dbReference type="PANTHER" id="PTHR10291">
    <property type="entry name" value="DEHYDRODOLICHYL DIPHOSPHATE SYNTHASE FAMILY MEMBER"/>
    <property type="match status" value="1"/>
</dbReference>
<dbReference type="Pfam" id="PF01255">
    <property type="entry name" value="Prenyltransf"/>
    <property type="match status" value="1"/>
</dbReference>
<dbReference type="SUPFAM" id="SSF64005">
    <property type="entry name" value="Undecaprenyl diphosphate synthase"/>
    <property type="match status" value="1"/>
</dbReference>
<dbReference type="PROSITE" id="PS01066">
    <property type="entry name" value="UPP_SYNTHASE"/>
    <property type="match status" value="1"/>
</dbReference>
<organism>
    <name type="scientific">Staphylococcus aureus (strain MSSA476)</name>
    <dbReference type="NCBI Taxonomy" id="282459"/>
    <lineage>
        <taxon>Bacteria</taxon>
        <taxon>Bacillati</taxon>
        <taxon>Bacillota</taxon>
        <taxon>Bacilli</taxon>
        <taxon>Bacillales</taxon>
        <taxon>Staphylococcaceae</taxon>
        <taxon>Staphylococcus</taxon>
    </lineage>
</organism>
<accession>Q6G9V3</accession>
<feature type="chain" id="PRO_0000123675" description="Isoprenyl transferase">
    <location>
        <begin position="1"/>
        <end position="256"/>
    </location>
</feature>
<feature type="active site" evidence="1">
    <location>
        <position position="33"/>
    </location>
</feature>
<feature type="active site" description="Proton acceptor" evidence="1">
    <location>
        <position position="81"/>
    </location>
</feature>
<feature type="binding site" evidence="1">
    <location>
        <position position="33"/>
    </location>
    <ligand>
        <name>Mg(2+)</name>
        <dbReference type="ChEBI" id="CHEBI:18420"/>
    </ligand>
</feature>
<feature type="binding site" evidence="1">
    <location>
        <begin position="34"/>
        <end position="37"/>
    </location>
    <ligand>
        <name>substrate</name>
    </ligand>
</feature>
<feature type="binding site" evidence="1">
    <location>
        <position position="38"/>
    </location>
    <ligand>
        <name>substrate</name>
    </ligand>
</feature>
<feature type="binding site" evidence="1">
    <location>
        <position position="46"/>
    </location>
    <ligand>
        <name>substrate</name>
    </ligand>
</feature>
<feature type="binding site" evidence="1">
    <location>
        <position position="50"/>
    </location>
    <ligand>
        <name>substrate</name>
    </ligand>
</feature>
<feature type="binding site" evidence="1">
    <location>
        <begin position="78"/>
        <end position="80"/>
    </location>
    <ligand>
        <name>substrate</name>
    </ligand>
</feature>
<feature type="binding site" evidence="1">
    <location>
        <position position="82"/>
    </location>
    <ligand>
        <name>substrate</name>
    </ligand>
</feature>
<feature type="binding site" evidence="1">
    <location>
        <position position="84"/>
    </location>
    <ligand>
        <name>substrate</name>
    </ligand>
</feature>
<feature type="binding site" evidence="1">
    <location>
        <position position="201"/>
    </location>
    <ligand>
        <name>substrate</name>
    </ligand>
</feature>
<feature type="binding site" evidence="1">
    <location>
        <begin position="207"/>
        <end position="209"/>
    </location>
    <ligand>
        <name>substrate</name>
    </ligand>
</feature>
<feature type="binding site" evidence="1">
    <location>
        <position position="220"/>
    </location>
    <ligand>
        <name>Mg(2+)</name>
        <dbReference type="ChEBI" id="CHEBI:18420"/>
    </ligand>
</feature>
<protein>
    <recommendedName>
        <fullName evidence="1">Isoprenyl transferase</fullName>
        <ecNumber evidence="1">2.5.1.-</ecNumber>
    </recommendedName>
</protein>
<keyword id="KW-0460">Magnesium</keyword>
<keyword id="KW-0479">Metal-binding</keyword>
<keyword id="KW-0808">Transferase</keyword>
<comment type="function">
    <text evidence="1">Catalyzes the condensation of isopentenyl diphosphate (IPP) with allylic pyrophosphates generating different type of terpenoids.</text>
</comment>
<comment type="cofactor">
    <cofactor evidence="1">
        <name>Mg(2+)</name>
        <dbReference type="ChEBI" id="CHEBI:18420"/>
    </cofactor>
    <text evidence="1">Binds 2 magnesium ions per subunit.</text>
</comment>
<comment type="subunit">
    <text evidence="1">Homodimer.</text>
</comment>
<comment type="similarity">
    <text evidence="1">Belongs to the UPP synthase family.</text>
</comment>
<gene>
    <name evidence="1" type="primary">uppS</name>
    <name type="ordered locus">SAS1194</name>
</gene>
<sequence length="256" mass="29848">MFKKLINKKNTINNYNEELDSSNIPEHIAIIMDGNGRWAKKRKMPRIKGHYEGMQTIKKITRVASDIGVKYLTLYAFSTENWSRPESEVNYIMNLPVNFLKTFLPELIEKNVKVETIGFTDKLPKSTIEAINNAKEKTANNTGLKLIFAINYGGRAELVHSIKNMFDELHQQGLNSDIIDETYINNHLMTKDYPDPELLIRTSGEQRISNFLIWQVSYSEFIFNQKLWPDFDEDELIKCIKIYQSRQRRFGGLSEE</sequence>
<evidence type="ECO:0000255" key="1">
    <source>
        <dbReference type="HAMAP-Rule" id="MF_01139"/>
    </source>
</evidence>